<comment type="similarity">
    <text evidence="1">To M.jannaschii MJ1544 and MJ1637.</text>
</comment>
<accession>P44099</accession>
<sequence>MSKAMISRENYLQQLIQFKDTDFIKVISGVRRSGKSVLLMQYRDYLQQQGIASENILYLNFESFEYQWVKDAQDFQQLIQEKMPSSQEKIYFLIDEIQFVEGWQKIVNALRVSFNTDIVITGSNANLLSGELATLLSGRYVEIKIYPLSFKEFLHAKNVDSQSRLVDKLYSEYEKYGGFPSVVMADEPLKETILSGIFDSIVLNDIAHRAGVKDTHILKSVILFLADNVGQLVNPSKISNTLTSERVPTSNHTISKYLDLLENAFLFYKAKQYDIRGKGYLKTNAKYFIVDNGLRRHAIGKKGANYANRLENIVFIELLRRGYSVDVGKLDSKEIDFIARKADEILYVQVAFEIPENTHETDNLLHIKDNYKKILITGKYYEQTEIDGIEVIYVVDWLLQ</sequence>
<dbReference type="EMBL" id="L42023">
    <property type="protein sequence ID" value="AAC22698.1"/>
    <property type="molecule type" value="Genomic_DNA"/>
</dbReference>
<dbReference type="PIR" id="I64018">
    <property type="entry name" value="I64018"/>
</dbReference>
<dbReference type="RefSeq" id="NP_439198.1">
    <property type="nucleotide sequence ID" value="NC_000907.1"/>
</dbReference>
<dbReference type="STRING" id="71421.HI_1038"/>
<dbReference type="DNASU" id="950021"/>
<dbReference type="EnsemblBacteria" id="AAC22698">
    <property type="protein sequence ID" value="AAC22698"/>
    <property type="gene ID" value="HI_1038"/>
</dbReference>
<dbReference type="KEGG" id="hin:HI_1038"/>
<dbReference type="PATRIC" id="fig|71421.8.peg.1082"/>
<dbReference type="eggNOG" id="COG1373">
    <property type="taxonomic scope" value="Bacteria"/>
</dbReference>
<dbReference type="HOGENOM" id="CLU_041527_1_1_6"/>
<dbReference type="OrthoDB" id="9801684at2"/>
<dbReference type="PhylomeDB" id="P44099"/>
<dbReference type="BioCyc" id="HINF71421:G1GJ1-1078-MONOMER"/>
<dbReference type="Proteomes" id="UP000000579">
    <property type="component" value="Chromosome"/>
</dbReference>
<dbReference type="InterPro" id="IPR041682">
    <property type="entry name" value="AAA_14"/>
</dbReference>
<dbReference type="InterPro" id="IPR025420">
    <property type="entry name" value="DUF4143"/>
</dbReference>
<dbReference type="InterPro" id="IPR027417">
    <property type="entry name" value="P-loop_NTPase"/>
</dbReference>
<dbReference type="PANTHER" id="PTHR33295">
    <property type="entry name" value="ATPASE"/>
    <property type="match status" value="1"/>
</dbReference>
<dbReference type="PANTHER" id="PTHR33295:SF20">
    <property type="entry name" value="ATPASE"/>
    <property type="match status" value="1"/>
</dbReference>
<dbReference type="Pfam" id="PF13173">
    <property type="entry name" value="AAA_14"/>
    <property type="match status" value="1"/>
</dbReference>
<dbReference type="Pfam" id="PF13635">
    <property type="entry name" value="DUF4143"/>
    <property type="match status" value="1"/>
</dbReference>
<dbReference type="SUPFAM" id="SSF52540">
    <property type="entry name" value="P-loop containing nucleoside triphosphate hydrolases"/>
    <property type="match status" value="1"/>
</dbReference>
<keyword id="KW-1185">Reference proteome</keyword>
<protein>
    <recommendedName>
        <fullName>Uncharacterized protein HI_1038</fullName>
    </recommendedName>
</protein>
<reference key="1">
    <citation type="journal article" date="1995" name="Science">
        <title>Whole-genome random sequencing and assembly of Haemophilus influenzae Rd.</title>
        <authorList>
            <person name="Fleischmann R.D."/>
            <person name="Adams M.D."/>
            <person name="White O."/>
            <person name="Clayton R.A."/>
            <person name="Kirkness E.F."/>
            <person name="Kerlavage A.R."/>
            <person name="Bult C.J."/>
            <person name="Tomb J.-F."/>
            <person name="Dougherty B.A."/>
            <person name="Merrick J.M."/>
            <person name="McKenney K."/>
            <person name="Sutton G.G."/>
            <person name="FitzHugh W."/>
            <person name="Fields C.A."/>
            <person name="Gocayne J.D."/>
            <person name="Scott J.D."/>
            <person name="Shirley R."/>
            <person name="Liu L.-I."/>
            <person name="Glodek A."/>
            <person name="Kelley J.M."/>
            <person name="Weidman J.F."/>
            <person name="Phillips C.A."/>
            <person name="Spriggs T."/>
            <person name="Hedblom E."/>
            <person name="Cotton M.D."/>
            <person name="Utterback T.R."/>
            <person name="Hanna M.C."/>
            <person name="Nguyen D.T."/>
            <person name="Saudek D.M."/>
            <person name="Brandon R.C."/>
            <person name="Fine L.D."/>
            <person name="Fritchman J.L."/>
            <person name="Fuhrmann J.L."/>
            <person name="Geoghagen N.S.M."/>
            <person name="Gnehm C.L."/>
            <person name="McDonald L.A."/>
            <person name="Small K.V."/>
            <person name="Fraser C.M."/>
            <person name="Smith H.O."/>
            <person name="Venter J.C."/>
        </authorList>
    </citation>
    <scope>NUCLEOTIDE SEQUENCE [LARGE SCALE GENOMIC DNA]</scope>
    <source>
        <strain>ATCC 51907 / DSM 11121 / KW20 / Rd</strain>
    </source>
</reference>
<proteinExistence type="predicted"/>
<gene>
    <name type="ordered locus">HI_1038</name>
</gene>
<evidence type="ECO:0000305" key="1"/>
<organism>
    <name type="scientific">Haemophilus influenzae (strain ATCC 51907 / DSM 11121 / KW20 / Rd)</name>
    <dbReference type="NCBI Taxonomy" id="71421"/>
    <lineage>
        <taxon>Bacteria</taxon>
        <taxon>Pseudomonadati</taxon>
        <taxon>Pseudomonadota</taxon>
        <taxon>Gammaproteobacteria</taxon>
        <taxon>Pasteurellales</taxon>
        <taxon>Pasteurellaceae</taxon>
        <taxon>Haemophilus</taxon>
    </lineage>
</organism>
<name>Y1038_HAEIN</name>
<feature type="chain" id="PRO_0000077994" description="Uncharacterized protein HI_1038">
    <location>
        <begin position="1"/>
        <end position="400"/>
    </location>
</feature>